<keyword id="KW-0012">Acyltransferase</keyword>
<keyword id="KW-0963">Cytoplasm</keyword>
<keyword id="KW-0408">Iron</keyword>
<keyword id="KW-0479">Metal-binding</keyword>
<keyword id="KW-0808">Transferase</keyword>
<keyword id="KW-0819">tRNA processing</keyword>
<protein>
    <recommendedName>
        <fullName evidence="1">tRNA N6-adenosine threonylcarbamoyltransferase</fullName>
        <ecNumber evidence="1">2.3.1.234</ecNumber>
    </recommendedName>
    <alternativeName>
        <fullName evidence="1">N6-L-threonylcarbamoyladenine synthase</fullName>
        <shortName evidence="1">t(6)A synthase</shortName>
    </alternativeName>
    <alternativeName>
        <fullName evidence="1">t(6)A37 threonylcarbamoyladenosine biosynthesis protein TsaD</fullName>
    </alternativeName>
    <alternativeName>
        <fullName evidence="1">tRNA threonylcarbamoyladenosine biosynthesis protein TsaD</fullName>
    </alternativeName>
</protein>
<reference key="1">
    <citation type="submission" date="2006-06" db="EMBL/GenBank/DDBJ databases">
        <title>Complete sequence of chromosome of Mesorhizobium sp. BNC1.</title>
        <authorList>
            <consortium name="US DOE Joint Genome Institute"/>
            <person name="Copeland A."/>
            <person name="Lucas S."/>
            <person name="Lapidus A."/>
            <person name="Barry K."/>
            <person name="Detter J.C."/>
            <person name="Glavina del Rio T."/>
            <person name="Hammon N."/>
            <person name="Israni S."/>
            <person name="Dalin E."/>
            <person name="Tice H."/>
            <person name="Pitluck S."/>
            <person name="Chertkov O."/>
            <person name="Brettin T."/>
            <person name="Bruce D."/>
            <person name="Han C."/>
            <person name="Tapia R."/>
            <person name="Gilna P."/>
            <person name="Schmutz J."/>
            <person name="Larimer F."/>
            <person name="Land M."/>
            <person name="Hauser L."/>
            <person name="Kyrpides N."/>
            <person name="Mikhailova N."/>
            <person name="Richardson P."/>
        </authorList>
    </citation>
    <scope>NUCLEOTIDE SEQUENCE [LARGE SCALE GENOMIC DNA]</scope>
    <source>
        <strain>BNC1</strain>
    </source>
</reference>
<sequence length="362" mass="37543">MTRVLGIETSCDETAAAVVTRGADEAPAILSNVVLSQIEEHAAFGGVVPEIAARAHVEALDGVIEAALAEAALSLDEVDAIAATAGPGLIGGLIVGLTTAKAIAAALGKPLLPVNHLEGHALTARLTDRLEFPYLLLLVSGGHTQIVHVAGVGRYERWASTIDDALGEAFDKTAKLLGLPYPGGPNVEKAAAEGDPARFAFPTPLKGEARPDFSFSGLKTAVRRAAGELAPLSEQDVADLCASFQFAVTQTLADRVARSLERFGKEHPKLQQPALVVAGGVAANAAVRGTLEDLCRKKGFRLVAPPLNLCGDNAAMIAWAGLERLESGLKQEGALAFAPRPRWPLDESAAPLFGAGKRGAKA</sequence>
<evidence type="ECO:0000255" key="1">
    <source>
        <dbReference type="HAMAP-Rule" id="MF_01445"/>
    </source>
</evidence>
<accession>Q11DF0</accession>
<gene>
    <name evidence="1" type="primary">tsaD</name>
    <name type="synonym">gcp</name>
    <name type="ordered locus">Meso_3203</name>
</gene>
<name>TSAD_CHESB</name>
<comment type="function">
    <text evidence="1">Required for the formation of a threonylcarbamoyl group on adenosine at position 37 (t(6)A37) in tRNAs that read codons beginning with adenine. Is involved in the transfer of the threonylcarbamoyl moiety of threonylcarbamoyl-AMP (TC-AMP) to the N6 group of A37, together with TsaE and TsaB. TsaD likely plays a direct catalytic role in this reaction.</text>
</comment>
<comment type="catalytic activity">
    <reaction evidence="1">
        <text>L-threonylcarbamoyladenylate + adenosine(37) in tRNA = N(6)-L-threonylcarbamoyladenosine(37) in tRNA + AMP + H(+)</text>
        <dbReference type="Rhea" id="RHEA:37059"/>
        <dbReference type="Rhea" id="RHEA-COMP:10162"/>
        <dbReference type="Rhea" id="RHEA-COMP:10163"/>
        <dbReference type="ChEBI" id="CHEBI:15378"/>
        <dbReference type="ChEBI" id="CHEBI:73682"/>
        <dbReference type="ChEBI" id="CHEBI:74411"/>
        <dbReference type="ChEBI" id="CHEBI:74418"/>
        <dbReference type="ChEBI" id="CHEBI:456215"/>
        <dbReference type="EC" id="2.3.1.234"/>
    </reaction>
</comment>
<comment type="cofactor">
    <cofactor evidence="1">
        <name>Fe(2+)</name>
        <dbReference type="ChEBI" id="CHEBI:29033"/>
    </cofactor>
    <text evidence="1">Binds 1 Fe(2+) ion per subunit.</text>
</comment>
<comment type="subcellular location">
    <subcellularLocation>
        <location evidence="1">Cytoplasm</location>
    </subcellularLocation>
</comment>
<comment type="similarity">
    <text evidence="1">Belongs to the KAE1 / TsaD family.</text>
</comment>
<organism>
    <name type="scientific">Chelativorans sp. (strain BNC1)</name>
    <dbReference type="NCBI Taxonomy" id="266779"/>
    <lineage>
        <taxon>Bacteria</taxon>
        <taxon>Pseudomonadati</taxon>
        <taxon>Pseudomonadota</taxon>
        <taxon>Alphaproteobacteria</taxon>
        <taxon>Hyphomicrobiales</taxon>
        <taxon>Phyllobacteriaceae</taxon>
        <taxon>Chelativorans</taxon>
    </lineage>
</organism>
<dbReference type="EC" id="2.3.1.234" evidence="1"/>
<dbReference type="EMBL" id="CP000390">
    <property type="protein sequence ID" value="ABG64575.1"/>
    <property type="molecule type" value="Genomic_DNA"/>
</dbReference>
<dbReference type="SMR" id="Q11DF0"/>
<dbReference type="STRING" id="266779.Meso_3203"/>
<dbReference type="KEGG" id="mes:Meso_3203"/>
<dbReference type="eggNOG" id="COG0533">
    <property type="taxonomic scope" value="Bacteria"/>
</dbReference>
<dbReference type="HOGENOM" id="CLU_023208_0_2_5"/>
<dbReference type="OrthoDB" id="9806197at2"/>
<dbReference type="GO" id="GO:0005737">
    <property type="term" value="C:cytoplasm"/>
    <property type="evidence" value="ECO:0007669"/>
    <property type="project" value="UniProtKB-SubCell"/>
</dbReference>
<dbReference type="GO" id="GO:0005506">
    <property type="term" value="F:iron ion binding"/>
    <property type="evidence" value="ECO:0007669"/>
    <property type="project" value="UniProtKB-UniRule"/>
</dbReference>
<dbReference type="GO" id="GO:0061711">
    <property type="term" value="F:N(6)-L-threonylcarbamoyladenine synthase activity"/>
    <property type="evidence" value="ECO:0007669"/>
    <property type="project" value="UniProtKB-EC"/>
</dbReference>
<dbReference type="GO" id="GO:0002949">
    <property type="term" value="P:tRNA threonylcarbamoyladenosine modification"/>
    <property type="evidence" value="ECO:0007669"/>
    <property type="project" value="UniProtKB-UniRule"/>
</dbReference>
<dbReference type="CDD" id="cd24133">
    <property type="entry name" value="ASKHA_NBD_TsaD_bac"/>
    <property type="match status" value="1"/>
</dbReference>
<dbReference type="FunFam" id="3.30.420.40:FF:000012">
    <property type="entry name" value="tRNA N6-adenosine threonylcarbamoyltransferase"/>
    <property type="match status" value="1"/>
</dbReference>
<dbReference type="Gene3D" id="3.30.420.40">
    <property type="match status" value="2"/>
</dbReference>
<dbReference type="HAMAP" id="MF_01445">
    <property type="entry name" value="TsaD"/>
    <property type="match status" value="1"/>
</dbReference>
<dbReference type="InterPro" id="IPR043129">
    <property type="entry name" value="ATPase_NBD"/>
</dbReference>
<dbReference type="InterPro" id="IPR000905">
    <property type="entry name" value="Gcp-like_dom"/>
</dbReference>
<dbReference type="InterPro" id="IPR017861">
    <property type="entry name" value="KAE1/TsaD"/>
</dbReference>
<dbReference type="InterPro" id="IPR017860">
    <property type="entry name" value="Peptidase_M22_CS"/>
</dbReference>
<dbReference type="InterPro" id="IPR022450">
    <property type="entry name" value="TsaD"/>
</dbReference>
<dbReference type="NCBIfam" id="TIGR00329">
    <property type="entry name" value="gcp_kae1"/>
    <property type="match status" value="1"/>
</dbReference>
<dbReference type="NCBIfam" id="TIGR03723">
    <property type="entry name" value="T6A_TsaD_YgjD"/>
    <property type="match status" value="1"/>
</dbReference>
<dbReference type="PANTHER" id="PTHR11735">
    <property type="entry name" value="TRNA N6-ADENOSINE THREONYLCARBAMOYLTRANSFERASE"/>
    <property type="match status" value="1"/>
</dbReference>
<dbReference type="PANTHER" id="PTHR11735:SF6">
    <property type="entry name" value="TRNA N6-ADENOSINE THREONYLCARBAMOYLTRANSFERASE, MITOCHONDRIAL"/>
    <property type="match status" value="1"/>
</dbReference>
<dbReference type="Pfam" id="PF00814">
    <property type="entry name" value="TsaD"/>
    <property type="match status" value="1"/>
</dbReference>
<dbReference type="PRINTS" id="PR00789">
    <property type="entry name" value="OSIALOPTASE"/>
</dbReference>
<dbReference type="SUPFAM" id="SSF53067">
    <property type="entry name" value="Actin-like ATPase domain"/>
    <property type="match status" value="1"/>
</dbReference>
<dbReference type="PROSITE" id="PS01016">
    <property type="entry name" value="GLYCOPROTEASE"/>
    <property type="match status" value="1"/>
</dbReference>
<proteinExistence type="inferred from homology"/>
<feature type="chain" id="PRO_0000303422" description="tRNA N6-adenosine threonylcarbamoyltransferase">
    <location>
        <begin position="1"/>
        <end position="362"/>
    </location>
</feature>
<feature type="binding site" evidence="1">
    <location>
        <position position="116"/>
    </location>
    <ligand>
        <name>Fe cation</name>
        <dbReference type="ChEBI" id="CHEBI:24875"/>
    </ligand>
</feature>
<feature type="binding site" evidence="1">
    <location>
        <position position="120"/>
    </location>
    <ligand>
        <name>Fe cation</name>
        <dbReference type="ChEBI" id="CHEBI:24875"/>
    </ligand>
</feature>
<feature type="binding site" evidence="1">
    <location>
        <begin position="138"/>
        <end position="142"/>
    </location>
    <ligand>
        <name>substrate</name>
    </ligand>
</feature>
<feature type="binding site" evidence="1">
    <location>
        <position position="171"/>
    </location>
    <ligand>
        <name>substrate</name>
    </ligand>
</feature>
<feature type="binding site" evidence="1">
    <location>
        <position position="184"/>
    </location>
    <ligand>
        <name>substrate</name>
    </ligand>
</feature>
<feature type="binding site" evidence="1">
    <location>
        <position position="284"/>
    </location>
    <ligand>
        <name>substrate</name>
    </ligand>
</feature>
<feature type="binding site" evidence="1">
    <location>
        <position position="312"/>
    </location>
    <ligand>
        <name>Fe cation</name>
        <dbReference type="ChEBI" id="CHEBI:24875"/>
    </ligand>
</feature>